<proteinExistence type="inferred from homology"/>
<protein>
    <recommendedName>
        <fullName evidence="1">Methionine import ATP-binding protein MetN</fullName>
        <ecNumber evidence="1">7.4.2.11</ecNumber>
    </recommendedName>
</protein>
<gene>
    <name evidence="1" type="primary">metN</name>
    <name type="ordered locus">spr0149</name>
</gene>
<reference key="1">
    <citation type="journal article" date="2001" name="J. Bacteriol.">
        <title>Genome of the bacterium Streptococcus pneumoniae strain R6.</title>
        <authorList>
            <person name="Hoskins J."/>
            <person name="Alborn W.E. Jr."/>
            <person name="Arnold J."/>
            <person name="Blaszczak L.C."/>
            <person name="Burgett S."/>
            <person name="DeHoff B.S."/>
            <person name="Estrem S.T."/>
            <person name="Fritz L."/>
            <person name="Fu D.-J."/>
            <person name="Fuller W."/>
            <person name="Geringer C."/>
            <person name="Gilmour R."/>
            <person name="Glass J.S."/>
            <person name="Khoja H."/>
            <person name="Kraft A.R."/>
            <person name="Lagace R.E."/>
            <person name="LeBlanc D.J."/>
            <person name="Lee L.N."/>
            <person name="Lefkowitz E.J."/>
            <person name="Lu J."/>
            <person name="Matsushima P."/>
            <person name="McAhren S.M."/>
            <person name="McHenney M."/>
            <person name="McLeaster K."/>
            <person name="Mundy C.W."/>
            <person name="Nicas T.I."/>
            <person name="Norris F.H."/>
            <person name="O'Gara M."/>
            <person name="Peery R.B."/>
            <person name="Robertson G.T."/>
            <person name="Rockey P."/>
            <person name="Sun P.-M."/>
            <person name="Winkler M.E."/>
            <person name="Yang Y."/>
            <person name="Young-Bellido M."/>
            <person name="Zhao G."/>
            <person name="Zook C.A."/>
            <person name="Baltz R.H."/>
            <person name="Jaskunas S.R."/>
            <person name="Rosteck P.R. Jr."/>
            <person name="Skatrud P.L."/>
            <person name="Glass J.I."/>
        </authorList>
    </citation>
    <scope>NUCLEOTIDE SEQUENCE [LARGE SCALE GENOMIC DNA]</scope>
    <source>
        <strain>ATCC BAA-255 / R6</strain>
    </source>
</reference>
<sequence>MSRDIIKLDQIDVTFHQKKRTITAVKDVTIHIQEGDIYGIVGYSGAGKSTLVRVINLLQKPSAGKITIDDDVIFDGKVTLTAEQLRRKRQDIGMIFQHFNLMSQKTAEENVAFALKHSGLSKEEKKAKVAKLLDLVGLADRAENYPSQLSGGQKQRVAIARALANDPKILISDESTSALDPKTTKQILALLQDLNQKLGLTVVLITHEMQIVKDIANRVAVMQDGHLIEEGSVLEIFSNPKQPLTQDFISTATGIDEAMVKIEKQEIVEHLSENSLLVQLKYAGASTDEPLLNELYKHYQVMANILYGNIEILDGTPVGELVVVLSGEKAALAGAQEAIRQAGVQLKVLKGVQ</sequence>
<organism>
    <name type="scientific">Streptococcus pneumoniae (strain ATCC BAA-255 / R6)</name>
    <dbReference type="NCBI Taxonomy" id="171101"/>
    <lineage>
        <taxon>Bacteria</taxon>
        <taxon>Bacillati</taxon>
        <taxon>Bacillota</taxon>
        <taxon>Bacilli</taxon>
        <taxon>Lactobacillales</taxon>
        <taxon>Streptococcaceae</taxon>
        <taxon>Streptococcus</taxon>
    </lineage>
</organism>
<dbReference type="EC" id="7.4.2.11" evidence="1"/>
<dbReference type="EMBL" id="AE007317">
    <property type="protein sequence ID" value="AAK98953.1"/>
    <property type="molecule type" value="Genomic_DNA"/>
</dbReference>
<dbReference type="PIR" id="E97890">
    <property type="entry name" value="E97890"/>
</dbReference>
<dbReference type="RefSeq" id="NP_357743.1">
    <property type="nucleotide sequence ID" value="NC_003098.1"/>
</dbReference>
<dbReference type="RefSeq" id="WP_000085677.1">
    <property type="nucleotide sequence ID" value="NC_003098.1"/>
</dbReference>
<dbReference type="SMR" id="Q8DRF9"/>
<dbReference type="STRING" id="171101.spr0149"/>
<dbReference type="KEGG" id="spr:spr0149"/>
<dbReference type="PATRIC" id="fig|171101.6.peg.176"/>
<dbReference type="eggNOG" id="COG1135">
    <property type="taxonomic scope" value="Bacteria"/>
</dbReference>
<dbReference type="HOGENOM" id="CLU_000604_1_3_9"/>
<dbReference type="Proteomes" id="UP000000586">
    <property type="component" value="Chromosome"/>
</dbReference>
<dbReference type="GO" id="GO:0005886">
    <property type="term" value="C:plasma membrane"/>
    <property type="evidence" value="ECO:0007669"/>
    <property type="project" value="UniProtKB-SubCell"/>
</dbReference>
<dbReference type="GO" id="GO:0033232">
    <property type="term" value="F:ABC-type D-methionine transporter activity"/>
    <property type="evidence" value="ECO:0007669"/>
    <property type="project" value="UniProtKB-EC"/>
</dbReference>
<dbReference type="GO" id="GO:0005524">
    <property type="term" value="F:ATP binding"/>
    <property type="evidence" value="ECO:0007669"/>
    <property type="project" value="UniProtKB-KW"/>
</dbReference>
<dbReference type="GO" id="GO:0016887">
    <property type="term" value="F:ATP hydrolysis activity"/>
    <property type="evidence" value="ECO:0007669"/>
    <property type="project" value="InterPro"/>
</dbReference>
<dbReference type="FunFam" id="3.40.50.300:FF:000056">
    <property type="entry name" value="Cell division ATP-binding protein FtsE"/>
    <property type="match status" value="1"/>
</dbReference>
<dbReference type="Gene3D" id="3.30.70.260">
    <property type="match status" value="1"/>
</dbReference>
<dbReference type="Gene3D" id="3.40.50.300">
    <property type="entry name" value="P-loop containing nucleotide triphosphate hydrolases"/>
    <property type="match status" value="1"/>
</dbReference>
<dbReference type="InterPro" id="IPR003593">
    <property type="entry name" value="AAA+_ATPase"/>
</dbReference>
<dbReference type="InterPro" id="IPR003439">
    <property type="entry name" value="ABC_transporter-like_ATP-bd"/>
</dbReference>
<dbReference type="InterPro" id="IPR017871">
    <property type="entry name" value="ABC_transporter-like_CS"/>
</dbReference>
<dbReference type="InterPro" id="IPR045865">
    <property type="entry name" value="ACT-like_dom_sf"/>
</dbReference>
<dbReference type="InterPro" id="IPR050086">
    <property type="entry name" value="MetN_ABC_transporter-like"/>
</dbReference>
<dbReference type="InterPro" id="IPR018449">
    <property type="entry name" value="NIL_domain"/>
</dbReference>
<dbReference type="InterPro" id="IPR027417">
    <property type="entry name" value="P-loop_NTPase"/>
</dbReference>
<dbReference type="PANTHER" id="PTHR43166">
    <property type="entry name" value="AMINO ACID IMPORT ATP-BINDING PROTEIN"/>
    <property type="match status" value="1"/>
</dbReference>
<dbReference type="PANTHER" id="PTHR43166:SF30">
    <property type="entry name" value="METHIONINE IMPORT ATP-BINDING PROTEIN METN"/>
    <property type="match status" value="1"/>
</dbReference>
<dbReference type="Pfam" id="PF00005">
    <property type="entry name" value="ABC_tran"/>
    <property type="match status" value="1"/>
</dbReference>
<dbReference type="Pfam" id="PF09383">
    <property type="entry name" value="NIL"/>
    <property type="match status" value="1"/>
</dbReference>
<dbReference type="SMART" id="SM00382">
    <property type="entry name" value="AAA"/>
    <property type="match status" value="1"/>
</dbReference>
<dbReference type="SMART" id="SM00930">
    <property type="entry name" value="NIL"/>
    <property type="match status" value="1"/>
</dbReference>
<dbReference type="SUPFAM" id="SSF55021">
    <property type="entry name" value="ACT-like"/>
    <property type="match status" value="1"/>
</dbReference>
<dbReference type="SUPFAM" id="SSF52540">
    <property type="entry name" value="P-loop containing nucleoside triphosphate hydrolases"/>
    <property type="match status" value="1"/>
</dbReference>
<dbReference type="PROSITE" id="PS00211">
    <property type="entry name" value="ABC_TRANSPORTER_1"/>
    <property type="match status" value="1"/>
</dbReference>
<dbReference type="PROSITE" id="PS50893">
    <property type="entry name" value="ABC_TRANSPORTER_2"/>
    <property type="match status" value="1"/>
</dbReference>
<dbReference type="PROSITE" id="PS51264">
    <property type="entry name" value="METN"/>
    <property type="match status" value="1"/>
</dbReference>
<name>METN_STRR6</name>
<feature type="chain" id="PRO_0000270416" description="Methionine import ATP-binding protein MetN">
    <location>
        <begin position="1"/>
        <end position="353"/>
    </location>
</feature>
<feature type="domain" description="ABC transporter" evidence="1">
    <location>
        <begin position="8"/>
        <end position="249"/>
    </location>
</feature>
<feature type="binding site" evidence="1">
    <location>
        <begin position="42"/>
        <end position="49"/>
    </location>
    <ligand>
        <name>ATP</name>
        <dbReference type="ChEBI" id="CHEBI:30616"/>
    </ligand>
</feature>
<accession>Q8DRF9</accession>
<evidence type="ECO:0000255" key="1">
    <source>
        <dbReference type="HAMAP-Rule" id="MF_01719"/>
    </source>
</evidence>
<comment type="function">
    <text evidence="1">Part of the ABC transporter complex MetNIQ involved in methionine import. Responsible for energy coupling to the transport system.</text>
</comment>
<comment type="catalytic activity">
    <reaction evidence="1">
        <text>L-methionine(out) + ATP + H2O = L-methionine(in) + ADP + phosphate + H(+)</text>
        <dbReference type="Rhea" id="RHEA:29779"/>
        <dbReference type="ChEBI" id="CHEBI:15377"/>
        <dbReference type="ChEBI" id="CHEBI:15378"/>
        <dbReference type="ChEBI" id="CHEBI:30616"/>
        <dbReference type="ChEBI" id="CHEBI:43474"/>
        <dbReference type="ChEBI" id="CHEBI:57844"/>
        <dbReference type="ChEBI" id="CHEBI:456216"/>
        <dbReference type="EC" id="7.4.2.11"/>
    </reaction>
</comment>
<comment type="catalytic activity">
    <reaction evidence="1">
        <text>D-methionine(out) + ATP + H2O = D-methionine(in) + ADP + phosphate + H(+)</text>
        <dbReference type="Rhea" id="RHEA:29767"/>
        <dbReference type="ChEBI" id="CHEBI:15377"/>
        <dbReference type="ChEBI" id="CHEBI:15378"/>
        <dbReference type="ChEBI" id="CHEBI:30616"/>
        <dbReference type="ChEBI" id="CHEBI:43474"/>
        <dbReference type="ChEBI" id="CHEBI:57932"/>
        <dbReference type="ChEBI" id="CHEBI:456216"/>
        <dbReference type="EC" id="7.4.2.11"/>
    </reaction>
</comment>
<comment type="subunit">
    <text evidence="1">The complex is composed of two ATP-binding proteins (MetN), two transmembrane proteins (MetI) and a solute-binding protein (MetQ).</text>
</comment>
<comment type="subcellular location">
    <subcellularLocation>
        <location evidence="1">Cell membrane</location>
        <topology evidence="1">Peripheral membrane protein</topology>
    </subcellularLocation>
</comment>
<comment type="similarity">
    <text evidence="1">Belongs to the ABC transporter superfamily. Methionine importer (TC 3.A.1.24) family.</text>
</comment>
<keyword id="KW-0029">Amino-acid transport</keyword>
<keyword id="KW-0067">ATP-binding</keyword>
<keyword id="KW-1003">Cell membrane</keyword>
<keyword id="KW-0472">Membrane</keyword>
<keyword id="KW-0547">Nucleotide-binding</keyword>
<keyword id="KW-1185">Reference proteome</keyword>
<keyword id="KW-1278">Translocase</keyword>
<keyword id="KW-0813">Transport</keyword>